<organism>
    <name type="scientific">Xanthomonas axonopodis pv. citri (strain 306)</name>
    <dbReference type="NCBI Taxonomy" id="190486"/>
    <lineage>
        <taxon>Bacteria</taxon>
        <taxon>Pseudomonadati</taxon>
        <taxon>Pseudomonadota</taxon>
        <taxon>Gammaproteobacteria</taxon>
        <taxon>Lysobacterales</taxon>
        <taxon>Lysobacteraceae</taxon>
        <taxon>Xanthomonas</taxon>
    </lineage>
</organism>
<name>CCA_XANAC</name>
<protein>
    <recommendedName>
        <fullName evidence="1">Multifunctional CCA protein</fullName>
    </recommendedName>
    <domain>
        <recommendedName>
            <fullName evidence="1">CCA-adding enzyme</fullName>
            <ecNumber evidence="1">2.7.7.72</ecNumber>
        </recommendedName>
        <alternativeName>
            <fullName evidence="1">CCA tRNA nucleotidyltransferase</fullName>
        </alternativeName>
        <alternativeName>
            <fullName evidence="1">tRNA CCA-pyrophosphorylase</fullName>
        </alternativeName>
        <alternativeName>
            <fullName evidence="1">tRNA adenylyl-/cytidylyl-transferase</fullName>
        </alternativeName>
        <alternativeName>
            <fullName evidence="1">tRNA nucleotidyltransferase</fullName>
        </alternativeName>
        <alternativeName>
            <fullName evidence="1">tRNA-NT</fullName>
        </alternativeName>
    </domain>
    <domain>
        <recommendedName>
            <fullName evidence="1">2'-nucleotidase</fullName>
            <ecNumber evidence="1">3.1.3.-</ecNumber>
        </recommendedName>
    </domain>
    <domain>
        <recommendedName>
            <fullName evidence="1">2',3'-cyclic phosphodiesterase</fullName>
            <ecNumber evidence="1">3.1.4.-</ecNumber>
        </recommendedName>
    </domain>
    <domain>
        <recommendedName>
            <fullName evidence="1">Phosphatase</fullName>
            <ecNumber evidence="1">3.1.3.-</ecNumber>
        </recommendedName>
    </domain>
</protein>
<feature type="chain" id="PRO_0000139007" description="Multifunctional CCA protein">
    <location>
        <begin position="1"/>
        <end position="410"/>
    </location>
</feature>
<feature type="domain" description="HD" evidence="1">
    <location>
        <begin position="229"/>
        <end position="347"/>
    </location>
</feature>
<feature type="binding site" evidence="1">
    <location>
        <position position="8"/>
    </location>
    <ligand>
        <name>ATP</name>
        <dbReference type="ChEBI" id="CHEBI:30616"/>
    </ligand>
</feature>
<feature type="binding site" evidence="1">
    <location>
        <position position="8"/>
    </location>
    <ligand>
        <name>CTP</name>
        <dbReference type="ChEBI" id="CHEBI:37563"/>
    </ligand>
</feature>
<feature type="binding site" evidence="1">
    <location>
        <position position="11"/>
    </location>
    <ligand>
        <name>ATP</name>
        <dbReference type="ChEBI" id="CHEBI:30616"/>
    </ligand>
</feature>
<feature type="binding site" evidence="1">
    <location>
        <position position="11"/>
    </location>
    <ligand>
        <name>CTP</name>
        <dbReference type="ChEBI" id="CHEBI:37563"/>
    </ligand>
</feature>
<feature type="binding site" evidence="1">
    <location>
        <position position="21"/>
    </location>
    <ligand>
        <name>Mg(2+)</name>
        <dbReference type="ChEBI" id="CHEBI:18420"/>
    </ligand>
</feature>
<feature type="binding site" evidence="1">
    <location>
        <position position="23"/>
    </location>
    <ligand>
        <name>Mg(2+)</name>
        <dbReference type="ChEBI" id="CHEBI:18420"/>
    </ligand>
</feature>
<feature type="binding site" evidence="1">
    <location>
        <position position="91"/>
    </location>
    <ligand>
        <name>ATP</name>
        <dbReference type="ChEBI" id="CHEBI:30616"/>
    </ligand>
</feature>
<feature type="binding site" evidence="1">
    <location>
        <position position="91"/>
    </location>
    <ligand>
        <name>CTP</name>
        <dbReference type="ChEBI" id="CHEBI:37563"/>
    </ligand>
</feature>
<feature type="binding site" evidence="1">
    <location>
        <position position="138"/>
    </location>
    <ligand>
        <name>ATP</name>
        <dbReference type="ChEBI" id="CHEBI:30616"/>
    </ligand>
</feature>
<feature type="binding site" evidence="1">
    <location>
        <position position="138"/>
    </location>
    <ligand>
        <name>CTP</name>
        <dbReference type="ChEBI" id="CHEBI:37563"/>
    </ligand>
</feature>
<feature type="binding site" evidence="1">
    <location>
        <position position="141"/>
    </location>
    <ligand>
        <name>ATP</name>
        <dbReference type="ChEBI" id="CHEBI:30616"/>
    </ligand>
</feature>
<feature type="binding site" evidence="1">
    <location>
        <position position="141"/>
    </location>
    <ligand>
        <name>CTP</name>
        <dbReference type="ChEBI" id="CHEBI:37563"/>
    </ligand>
</feature>
<reference key="1">
    <citation type="journal article" date="2002" name="Nature">
        <title>Comparison of the genomes of two Xanthomonas pathogens with differing host specificities.</title>
        <authorList>
            <person name="da Silva A.C.R."/>
            <person name="Ferro J.A."/>
            <person name="Reinach F.C."/>
            <person name="Farah C.S."/>
            <person name="Furlan L.R."/>
            <person name="Quaggio R.B."/>
            <person name="Monteiro-Vitorello C.B."/>
            <person name="Van Sluys M.A."/>
            <person name="Almeida N.F. Jr."/>
            <person name="Alves L.M.C."/>
            <person name="do Amaral A.M."/>
            <person name="Bertolini M.C."/>
            <person name="Camargo L.E.A."/>
            <person name="Camarotte G."/>
            <person name="Cannavan F."/>
            <person name="Cardozo J."/>
            <person name="Chambergo F."/>
            <person name="Ciapina L.P."/>
            <person name="Cicarelli R.M.B."/>
            <person name="Coutinho L.L."/>
            <person name="Cursino-Santos J.R."/>
            <person name="El-Dorry H."/>
            <person name="Faria J.B."/>
            <person name="Ferreira A.J.S."/>
            <person name="Ferreira R.C.C."/>
            <person name="Ferro M.I.T."/>
            <person name="Formighieri E.F."/>
            <person name="Franco M.C."/>
            <person name="Greggio C.C."/>
            <person name="Gruber A."/>
            <person name="Katsuyama A.M."/>
            <person name="Kishi L.T."/>
            <person name="Leite R.P."/>
            <person name="Lemos E.G.M."/>
            <person name="Lemos M.V.F."/>
            <person name="Locali E.C."/>
            <person name="Machado M.A."/>
            <person name="Madeira A.M.B.N."/>
            <person name="Martinez-Rossi N.M."/>
            <person name="Martins E.C."/>
            <person name="Meidanis J."/>
            <person name="Menck C.F.M."/>
            <person name="Miyaki C.Y."/>
            <person name="Moon D.H."/>
            <person name="Moreira L.M."/>
            <person name="Novo M.T.M."/>
            <person name="Okura V.K."/>
            <person name="Oliveira M.C."/>
            <person name="Oliveira V.R."/>
            <person name="Pereira H.A."/>
            <person name="Rossi A."/>
            <person name="Sena J.A.D."/>
            <person name="Silva C."/>
            <person name="de Souza R.F."/>
            <person name="Spinola L.A.F."/>
            <person name="Takita M.A."/>
            <person name="Tamura R.E."/>
            <person name="Teixeira E.C."/>
            <person name="Tezza R.I.D."/>
            <person name="Trindade dos Santos M."/>
            <person name="Truffi D."/>
            <person name="Tsai S.M."/>
            <person name="White F.F."/>
            <person name="Setubal J.C."/>
            <person name="Kitajima J.P."/>
        </authorList>
    </citation>
    <scope>NUCLEOTIDE SEQUENCE [LARGE SCALE GENOMIC DNA]</scope>
    <source>
        <strain>306</strain>
    </source>
</reference>
<proteinExistence type="inferred from homology"/>
<keyword id="KW-0067">ATP-binding</keyword>
<keyword id="KW-0378">Hydrolase</keyword>
<keyword id="KW-0460">Magnesium</keyword>
<keyword id="KW-0479">Metal-binding</keyword>
<keyword id="KW-0511">Multifunctional enzyme</keyword>
<keyword id="KW-0533">Nickel</keyword>
<keyword id="KW-0547">Nucleotide-binding</keyword>
<keyword id="KW-0548">Nucleotidyltransferase</keyword>
<keyword id="KW-0692">RNA repair</keyword>
<keyword id="KW-0694">RNA-binding</keyword>
<keyword id="KW-0808">Transferase</keyword>
<keyword id="KW-0819">tRNA processing</keyword>
<comment type="function">
    <text evidence="1">Catalyzes the addition and repair of the essential 3'-terminal CCA sequence in tRNAs without using a nucleic acid template. Adds these three nucleotides in the order of C, C, and A to the tRNA nucleotide-73, using CTP and ATP as substrates and producing inorganic pyrophosphate. tRNA 3'-terminal CCA addition is required both for tRNA processing and repair. Also involved in tRNA surveillance by mediating tandem CCA addition to generate a CCACCA at the 3' terminus of unstable tRNAs. While stable tRNAs receive only 3'-terminal CCA, unstable tRNAs are marked with CCACCA and rapidly degraded.</text>
</comment>
<comment type="catalytic activity">
    <reaction evidence="1">
        <text>a tRNA precursor + 2 CTP + ATP = a tRNA with a 3' CCA end + 3 diphosphate</text>
        <dbReference type="Rhea" id="RHEA:14433"/>
        <dbReference type="Rhea" id="RHEA-COMP:10465"/>
        <dbReference type="Rhea" id="RHEA-COMP:10468"/>
        <dbReference type="ChEBI" id="CHEBI:30616"/>
        <dbReference type="ChEBI" id="CHEBI:33019"/>
        <dbReference type="ChEBI" id="CHEBI:37563"/>
        <dbReference type="ChEBI" id="CHEBI:74896"/>
        <dbReference type="ChEBI" id="CHEBI:83071"/>
        <dbReference type="EC" id="2.7.7.72"/>
    </reaction>
</comment>
<comment type="catalytic activity">
    <reaction evidence="1">
        <text>a tRNA with a 3' CCA end + 2 CTP + ATP = a tRNA with a 3' CCACCA end + 3 diphosphate</text>
        <dbReference type="Rhea" id="RHEA:76235"/>
        <dbReference type="Rhea" id="RHEA-COMP:10468"/>
        <dbReference type="Rhea" id="RHEA-COMP:18655"/>
        <dbReference type="ChEBI" id="CHEBI:30616"/>
        <dbReference type="ChEBI" id="CHEBI:33019"/>
        <dbReference type="ChEBI" id="CHEBI:37563"/>
        <dbReference type="ChEBI" id="CHEBI:83071"/>
        <dbReference type="ChEBI" id="CHEBI:195187"/>
    </reaction>
    <physiologicalReaction direction="left-to-right" evidence="1">
        <dbReference type="Rhea" id="RHEA:76236"/>
    </physiologicalReaction>
</comment>
<comment type="cofactor">
    <cofactor evidence="1">
        <name>Mg(2+)</name>
        <dbReference type="ChEBI" id="CHEBI:18420"/>
    </cofactor>
    <text evidence="1">Magnesium is required for nucleotidyltransferase activity.</text>
</comment>
<comment type="cofactor">
    <cofactor evidence="1">
        <name>Ni(2+)</name>
        <dbReference type="ChEBI" id="CHEBI:49786"/>
    </cofactor>
    <text evidence="1">Nickel for phosphatase activity.</text>
</comment>
<comment type="subunit">
    <text evidence="1">Monomer. Can also form homodimers and oligomers.</text>
</comment>
<comment type="domain">
    <text evidence="1">Comprises two domains: an N-terminal domain containing the nucleotidyltransferase activity and a C-terminal HD domain associated with both phosphodiesterase and phosphatase activities.</text>
</comment>
<comment type="miscellaneous">
    <text evidence="1">A single active site specifically recognizes both ATP and CTP and is responsible for their addition.</text>
</comment>
<comment type="similarity">
    <text evidence="1">Belongs to the tRNA nucleotidyltransferase/poly(A) polymerase family. Bacterial CCA-adding enzyme type 1 subfamily.</text>
</comment>
<accession>Q8PPG9</accession>
<gene>
    <name evidence="1" type="primary">cca</name>
    <name type="ordered locus">XAC0717</name>
</gene>
<evidence type="ECO:0000255" key="1">
    <source>
        <dbReference type="HAMAP-Rule" id="MF_01261"/>
    </source>
</evidence>
<sequence>MKIYLVGGAVRDALLEQPAGDRDWVVVGADQAQMEAQGFKPVGKDFPVFLHPRSGEEYALARTERKSGRGYRGFVVDADPSVTLEEDLLRRDFTINAIARDEDTGQLFDPYNGVRDLQARVLRHVGPAFIEDPVRVLRAARFMARLAPLGFSLAAETAALMRDMAAGGELDSLVPERVWQELRRALSCAQPSAFLRTLHDADALRVILPEVDALYGVPQRADFHPEVDTGIHQEMVSDIAARLAPGDALVGFAALTHDLGKALTPQAQWPRHVMHEQRGVAPLQALCERLKVPQDFRQLAIIACREHLNVHRLAELRDRTLHELLVRCDAFRRPERIAQLALVCEADKRGRLGSEEAAYPQGEALKRLHAAALAINARDLAAEGLQGPQIGEALTKARIAAIAAARNTGA</sequence>
<dbReference type="EC" id="2.7.7.72" evidence="1"/>
<dbReference type="EC" id="3.1.3.-" evidence="1"/>
<dbReference type="EC" id="3.1.4.-" evidence="1"/>
<dbReference type="EMBL" id="AE008923">
    <property type="protein sequence ID" value="AAM35606.1"/>
    <property type="molecule type" value="Genomic_DNA"/>
</dbReference>
<dbReference type="RefSeq" id="WP_003482622.1">
    <property type="nucleotide sequence ID" value="NC_003919.1"/>
</dbReference>
<dbReference type="SMR" id="Q8PPG9"/>
<dbReference type="KEGG" id="xac:XAC0717"/>
<dbReference type="eggNOG" id="COG0617">
    <property type="taxonomic scope" value="Bacteria"/>
</dbReference>
<dbReference type="HOGENOM" id="CLU_015961_1_1_6"/>
<dbReference type="Proteomes" id="UP000000576">
    <property type="component" value="Chromosome"/>
</dbReference>
<dbReference type="GO" id="GO:0005524">
    <property type="term" value="F:ATP binding"/>
    <property type="evidence" value="ECO:0007669"/>
    <property type="project" value="UniProtKB-UniRule"/>
</dbReference>
<dbReference type="GO" id="GO:0004810">
    <property type="term" value="F:CCA tRNA nucleotidyltransferase activity"/>
    <property type="evidence" value="ECO:0007669"/>
    <property type="project" value="UniProtKB-UniRule"/>
</dbReference>
<dbReference type="GO" id="GO:0004112">
    <property type="term" value="F:cyclic-nucleotide phosphodiesterase activity"/>
    <property type="evidence" value="ECO:0007669"/>
    <property type="project" value="UniProtKB-UniRule"/>
</dbReference>
<dbReference type="GO" id="GO:0000287">
    <property type="term" value="F:magnesium ion binding"/>
    <property type="evidence" value="ECO:0007669"/>
    <property type="project" value="UniProtKB-UniRule"/>
</dbReference>
<dbReference type="GO" id="GO:0016791">
    <property type="term" value="F:phosphatase activity"/>
    <property type="evidence" value="ECO:0007669"/>
    <property type="project" value="UniProtKB-UniRule"/>
</dbReference>
<dbReference type="GO" id="GO:0000049">
    <property type="term" value="F:tRNA binding"/>
    <property type="evidence" value="ECO:0007669"/>
    <property type="project" value="UniProtKB-UniRule"/>
</dbReference>
<dbReference type="GO" id="GO:0042245">
    <property type="term" value="P:RNA repair"/>
    <property type="evidence" value="ECO:0007669"/>
    <property type="project" value="UniProtKB-KW"/>
</dbReference>
<dbReference type="GO" id="GO:0001680">
    <property type="term" value="P:tRNA 3'-terminal CCA addition"/>
    <property type="evidence" value="ECO:0007669"/>
    <property type="project" value="UniProtKB-UniRule"/>
</dbReference>
<dbReference type="CDD" id="cd05398">
    <property type="entry name" value="NT_ClassII-CCAase"/>
    <property type="match status" value="1"/>
</dbReference>
<dbReference type="Gene3D" id="3.30.460.10">
    <property type="entry name" value="Beta Polymerase, domain 2"/>
    <property type="match status" value="1"/>
</dbReference>
<dbReference type="Gene3D" id="1.10.3090.10">
    <property type="entry name" value="cca-adding enzyme, domain 2"/>
    <property type="match status" value="1"/>
</dbReference>
<dbReference type="HAMAP" id="MF_01261">
    <property type="entry name" value="CCA_bact_type1"/>
    <property type="match status" value="1"/>
</dbReference>
<dbReference type="InterPro" id="IPR012006">
    <property type="entry name" value="CCA_bact"/>
</dbReference>
<dbReference type="InterPro" id="IPR006674">
    <property type="entry name" value="HD_domain"/>
</dbReference>
<dbReference type="InterPro" id="IPR043519">
    <property type="entry name" value="NT_sf"/>
</dbReference>
<dbReference type="InterPro" id="IPR002646">
    <property type="entry name" value="PolA_pol_head_dom"/>
</dbReference>
<dbReference type="InterPro" id="IPR032828">
    <property type="entry name" value="PolyA_RNA-bd"/>
</dbReference>
<dbReference type="InterPro" id="IPR050124">
    <property type="entry name" value="tRNA_CCA-adding_enzyme"/>
</dbReference>
<dbReference type="NCBIfam" id="NF008137">
    <property type="entry name" value="PRK10885.1"/>
    <property type="match status" value="1"/>
</dbReference>
<dbReference type="PANTHER" id="PTHR47545">
    <property type="entry name" value="MULTIFUNCTIONAL CCA PROTEIN"/>
    <property type="match status" value="1"/>
</dbReference>
<dbReference type="PANTHER" id="PTHR47545:SF1">
    <property type="entry name" value="MULTIFUNCTIONAL CCA PROTEIN"/>
    <property type="match status" value="1"/>
</dbReference>
<dbReference type="Pfam" id="PF01966">
    <property type="entry name" value="HD"/>
    <property type="match status" value="1"/>
</dbReference>
<dbReference type="Pfam" id="PF01743">
    <property type="entry name" value="PolyA_pol"/>
    <property type="match status" value="1"/>
</dbReference>
<dbReference type="Pfam" id="PF12627">
    <property type="entry name" value="PolyA_pol_RNAbd"/>
    <property type="match status" value="1"/>
</dbReference>
<dbReference type="PIRSF" id="PIRSF000813">
    <property type="entry name" value="CCA_bact"/>
    <property type="match status" value="1"/>
</dbReference>
<dbReference type="SUPFAM" id="SSF81301">
    <property type="entry name" value="Nucleotidyltransferase"/>
    <property type="match status" value="1"/>
</dbReference>
<dbReference type="SUPFAM" id="SSF81891">
    <property type="entry name" value="Poly A polymerase C-terminal region-like"/>
    <property type="match status" value="1"/>
</dbReference>
<dbReference type="PROSITE" id="PS51831">
    <property type="entry name" value="HD"/>
    <property type="match status" value="1"/>
</dbReference>